<sequence>MFKFRKKSHQEVLDNIPNHIGIIMDGNGRWAKKRLQPRVMGHKAGMDALQKVTIEASQLGVKVLTVYAFSTENWSRPQDEVKFIMNLPVEFFNKYVPELDKNNVRILTIGDNSRLPKETLDALEKAVEQTKHNSGLILNFALNYGGRAEIVSAVQAIAKEVEIGRLRPEAIDEDLIAKHLMTDKLPYLYRDPDLIIRTSGELRLSNFLPWQSAYSEFYFTDVFWPDFDQQGLHQAISDYNKRHRRFGGV</sequence>
<evidence type="ECO:0000255" key="1">
    <source>
        <dbReference type="HAMAP-Rule" id="MF_01139"/>
    </source>
</evidence>
<protein>
    <recommendedName>
        <fullName evidence="1">Isoprenyl transferase</fullName>
        <ecNumber evidence="1">2.5.1.-</ecNumber>
    </recommendedName>
</protein>
<reference key="1">
    <citation type="journal article" date="2004" name="Nat. Biotechnol.">
        <title>Complete sequence and comparative genome analysis of the dairy bacterium Streptococcus thermophilus.</title>
        <authorList>
            <person name="Bolotin A."/>
            <person name="Quinquis B."/>
            <person name="Renault P."/>
            <person name="Sorokin A."/>
            <person name="Ehrlich S.D."/>
            <person name="Kulakauskas S."/>
            <person name="Lapidus A."/>
            <person name="Goltsman E."/>
            <person name="Mazur M."/>
            <person name="Pusch G.D."/>
            <person name="Fonstein M."/>
            <person name="Overbeek R."/>
            <person name="Kyprides N."/>
            <person name="Purnelle B."/>
            <person name="Prozzi D."/>
            <person name="Ngui K."/>
            <person name="Masuy D."/>
            <person name="Hancy F."/>
            <person name="Burteau S."/>
            <person name="Boutry M."/>
            <person name="Delcour J."/>
            <person name="Goffeau A."/>
            <person name="Hols P."/>
        </authorList>
    </citation>
    <scope>NUCLEOTIDE SEQUENCE [LARGE SCALE GENOMIC DNA]</scope>
    <source>
        <strain>ATCC BAA-250 / LMG 18311</strain>
    </source>
</reference>
<keyword id="KW-0460">Magnesium</keyword>
<keyword id="KW-0479">Metal-binding</keyword>
<keyword id="KW-1185">Reference proteome</keyword>
<keyword id="KW-0808">Transferase</keyword>
<gene>
    <name evidence="1" type="primary">uppS</name>
    <name type="ordered locus">stu0197</name>
</gene>
<name>ISPT_STRT2</name>
<feature type="chain" id="PRO_0000123697" description="Isoprenyl transferase">
    <location>
        <begin position="1"/>
        <end position="249"/>
    </location>
</feature>
<feature type="active site" evidence="1">
    <location>
        <position position="25"/>
    </location>
</feature>
<feature type="active site" description="Proton acceptor" evidence="1">
    <location>
        <position position="73"/>
    </location>
</feature>
<feature type="binding site" evidence="1">
    <location>
        <position position="25"/>
    </location>
    <ligand>
        <name>Mg(2+)</name>
        <dbReference type="ChEBI" id="CHEBI:18420"/>
    </ligand>
</feature>
<feature type="binding site" evidence="1">
    <location>
        <begin position="26"/>
        <end position="29"/>
    </location>
    <ligand>
        <name>substrate</name>
    </ligand>
</feature>
<feature type="binding site" evidence="1">
    <location>
        <position position="30"/>
    </location>
    <ligand>
        <name>substrate</name>
    </ligand>
</feature>
<feature type="binding site" evidence="1">
    <location>
        <position position="38"/>
    </location>
    <ligand>
        <name>substrate</name>
    </ligand>
</feature>
<feature type="binding site" evidence="1">
    <location>
        <position position="42"/>
    </location>
    <ligand>
        <name>substrate</name>
    </ligand>
</feature>
<feature type="binding site" evidence="1">
    <location>
        <begin position="70"/>
        <end position="72"/>
    </location>
    <ligand>
        <name>substrate</name>
    </ligand>
</feature>
<feature type="binding site" evidence="1">
    <location>
        <position position="74"/>
    </location>
    <ligand>
        <name>substrate</name>
    </ligand>
</feature>
<feature type="binding site" evidence="1">
    <location>
        <position position="76"/>
    </location>
    <ligand>
        <name>substrate</name>
    </ligand>
</feature>
<feature type="binding site" evidence="1">
    <location>
        <position position="197"/>
    </location>
    <ligand>
        <name>substrate</name>
    </ligand>
</feature>
<feature type="binding site" evidence="1">
    <location>
        <begin position="203"/>
        <end position="205"/>
    </location>
    <ligand>
        <name>substrate</name>
    </ligand>
</feature>
<feature type="binding site" evidence="1">
    <location>
        <position position="216"/>
    </location>
    <ligand>
        <name>Mg(2+)</name>
        <dbReference type="ChEBI" id="CHEBI:18420"/>
    </ligand>
</feature>
<accession>Q5M677</accession>
<comment type="function">
    <text evidence="1">Catalyzes the condensation of isopentenyl diphosphate (IPP) with allylic pyrophosphates generating different type of terpenoids.</text>
</comment>
<comment type="cofactor">
    <cofactor evidence="1">
        <name>Mg(2+)</name>
        <dbReference type="ChEBI" id="CHEBI:18420"/>
    </cofactor>
    <text evidence="1">Binds 2 magnesium ions per subunit.</text>
</comment>
<comment type="subunit">
    <text evidence="1">Homodimer.</text>
</comment>
<comment type="similarity">
    <text evidence="1">Belongs to the UPP synthase family.</text>
</comment>
<proteinExistence type="inferred from homology"/>
<dbReference type="EC" id="2.5.1.-" evidence="1"/>
<dbReference type="EMBL" id="CP000023">
    <property type="protein sequence ID" value="AAV59922.1"/>
    <property type="molecule type" value="Genomic_DNA"/>
</dbReference>
<dbReference type="RefSeq" id="WP_002949314.1">
    <property type="nucleotide sequence ID" value="NC_006448.1"/>
</dbReference>
<dbReference type="SMR" id="Q5M677"/>
<dbReference type="STRING" id="264199.stu0197"/>
<dbReference type="KEGG" id="stl:stu0197"/>
<dbReference type="eggNOG" id="COG0020">
    <property type="taxonomic scope" value="Bacteria"/>
</dbReference>
<dbReference type="HOGENOM" id="CLU_038505_1_1_9"/>
<dbReference type="Proteomes" id="UP000001170">
    <property type="component" value="Chromosome"/>
</dbReference>
<dbReference type="GO" id="GO:0005829">
    <property type="term" value="C:cytosol"/>
    <property type="evidence" value="ECO:0007669"/>
    <property type="project" value="TreeGrafter"/>
</dbReference>
<dbReference type="GO" id="GO:0008834">
    <property type="term" value="F:ditrans,polycis-undecaprenyl-diphosphate synthase [(2E,6E)-farnesyl-diphosphate specific] activity"/>
    <property type="evidence" value="ECO:0007669"/>
    <property type="project" value="TreeGrafter"/>
</dbReference>
<dbReference type="GO" id="GO:0000287">
    <property type="term" value="F:magnesium ion binding"/>
    <property type="evidence" value="ECO:0007669"/>
    <property type="project" value="UniProtKB-UniRule"/>
</dbReference>
<dbReference type="GO" id="GO:0030145">
    <property type="term" value="F:manganese ion binding"/>
    <property type="evidence" value="ECO:0007669"/>
    <property type="project" value="TreeGrafter"/>
</dbReference>
<dbReference type="GO" id="GO:0016094">
    <property type="term" value="P:polyprenol biosynthetic process"/>
    <property type="evidence" value="ECO:0007669"/>
    <property type="project" value="TreeGrafter"/>
</dbReference>
<dbReference type="CDD" id="cd00475">
    <property type="entry name" value="Cis_IPPS"/>
    <property type="match status" value="1"/>
</dbReference>
<dbReference type="FunFam" id="3.40.1180.10:FF:000001">
    <property type="entry name" value="(2E,6E)-farnesyl-diphosphate-specific ditrans,polycis-undecaprenyl-diphosphate synthase"/>
    <property type="match status" value="1"/>
</dbReference>
<dbReference type="Gene3D" id="3.40.1180.10">
    <property type="entry name" value="Decaprenyl diphosphate synthase-like"/>
    <property type="match status" value="1"/>
</dbReference>
<dbReference type="HAMAP" id="MF_01139">
    <property type="entry name" value="ISPT"/>
    <property type="match status" value="1"/>
</dbReference>
<dbReference type="InterPro" id="IPR001441">
    <property type="entry name" value="UPP_synth-like"/>
</dbReference>
<dbReference type="InterPro" id="IPR018520">
    <property type="entry name" value="UPP_synth-like_CS"/>
</dbReference>
<dbReference type="InterPro" id="IPR036424">
    <property type="entry name" value="UPP_synth-like_sf"/>
</dbReference>
<dbReference type="NCBIfam" id="NF011405">
    <property type="entry name" value="PRK14830.1"/>
    <property type="match status" value="1"/>
</dbReference>
<dbReference type="NCBIfam" id="TIGR00055">
    <property type="entry name" value="uppS"/>
    <property type="match status" value="1"/>
</dbReference>
<dbReference type="PANTHER" id="PTHR10291:SF0">
    <property type="entry name" value="DEHYDRODOLICHYL DIPHOSPHATE SYNTHASE 2"/>
    <property type="match status" value="1"/>
</dbReference>
<dbReference type="PANTHER" id="PTHR10291">
    <property type="entry name" value="DEHYDRODOLICHYL DIPHOSPHATE SYNTHASE FAMILY MEMBER"/>
    <property type="match status" value="1"/>
</dbReference>
<dbReference type="Pfam" id="PF01255">
    <property type="entry name" value="Prenyltransf"/>
    <property type="match status" value="1"/>
</dbReference>
<dbReference type="SUPFAM" id="SSF64005">
    <property type="entry name" value="Undecaprenyl diphosphate synthase"/>
    <property type="match status" value="1"/>
</dbReference>
<dbReference type="PROSITE" id="PS01066">
    <property type="entry name" value="UPP_SYNTHASE"/>
    <property type="match status" value="1"/>
</dbReference>
<organism>
    <name type="scientific">Streptococcus thermophilus (strain ATCC BAA-250 / LMG 18311)</name>
    <dbReference type="NCBI Taxonomy" id="264199"/>
    <lineage>
        <taxon>Bacteria</taxon>
        <taxon>Bacillati</taxon>
        <taxon>Bacillota</taxon>
        <taxon>Bacilli</taxon>
        <taxon>Lactobacillales</taxon>
        <taxon>Streptococcaceae</taxon>
        <taxon>Streptococcus</taxon>
    </lineage>
</organism>